<organism>
    <name type="scientific">Escherichia coli (strain K12)</name>
    <dbReference type="NCBI Taxonomy" id="83333"/>
    <lineage>
        <taxon>Bacteria</taxon>
        <taxon>Pseudomonadati</taxon>
        <taxon>Pseudomonadota</taxon>
        <taxon>Gammaproteobacteria</taxon>
        <taxon>Enterobacterales</taxon>
        <taxon>Enterobacteriaceae</taxon>
        <taxon>Escherichia</taxon>
    </lineage>
</organism>
<keyword id="KW-0002">3D-structure</keyword>
<keyword id="KW-0238">DNA-binding</keyword>
<keyword id="KW-1185">Reference proteome</keyword>
<keyword id="KW-0678">Repressor</keyword>
<keyword id="KW-1277">Toxin-antitoxin system</keyword>
<keyword id="KW-0804">Transcription</keyword>
<keyword id="KW-0805">Transcription regulation</keyword>
<feature type="chain" id="PRO_0000149763" description="Antitoxin HigA">
    <location>
        <begin position="1"/>
        <end position="138"/>
    </location>
</feature>
<feature type="domain" description="HTH cro/C1-type" evidence="1">
    <location>
        <begin position="84"/>
        <end position="136"/>
    </location>
</feature>
<feature type="DNA-binding region" description="H-T-H motif" evidence="1">
    <location>
        <begin position="95"/>
        <end position="114"/>
    </location>
</feature>
<feature type="helix" evidence="4">
    <location>
        <begin position="4"/>
        <end position="17"/>
    </location>
</feature>
<feature type="helix" evidence="4">
    <location>
        <begin position="19"/>
        <end position="22"/>
    </location>
</feature>
<feature type="helix" evidence="4">
    <location>
        <begin position="27"/>
        <end position="43"/>
    </location>
</feature>
<feature type="helix" evidence="4">
    <location>
        <begin position="49"/>
        <end position="63"/>
    </location>
</feature>
<feature type="helix" evidence="4">
    <location>
        <begin position="65"/>
        <end position="76"/>
    </location>
</feature>
<feature type="helix" evidence="4">
    <location>
        <begin position="80"/>
        <end position="91"/>
    </location>
</feature>
<feature type="turn" evidence="4">
    <location>
        <begin position="99"/>
        <end position="101"/>
    </location>
</feature>
<feature type="helix" evidence="4">
    <location>
        <begin position="104"/>
        <end position="111"/>
    </location>
</feature>
<feature type="helix" evidence="4">
    <location>
        <begin position="119"/>
        <end position="129"/>
    </location>
</feature>
<feature type="helix" evidence="4">
    <location>
        <begin position="133"/>
        <end position="136"/>
    </location>
</feature>
<name>HIGA_ECOLI</name>
<comment type="function">
    <text evidence="2">Antitoxin component of a type II toxin-antitoxin (TA) system. Functions as an mRNA interferase antitoxin; overexpression prevents HigB-mediated cessation of cell growth and inhibition of cell proliferation.</text>
</comment>
<comment type="subunit">
    <text evidence="3">Probably forms a complex with the mRNA interferase HigB which inhibits the mRNA interferase activity.</text>
</comment>
<comment type="interaction">
    <interactant intactId="EBI-1131548">
        <id>P67701</id>
    </interactant>
    <interactant intactId="EBI-1135071">
        <id>P64578</id>
        <label>higB</label>
    </interactant>
    <organismsDiffer>false</organismsDiffer>
    <experiments>4</experiments>
</comment>
<comment type="induction">
    <text evidence="2">Induced by amino acid starvation and when translation is blocked. Induction is decreased in the absence of the Lon protease suggesting, by homology to other toxin-antitoxin systems, that Lon may degrade the HigA antitoxin. Transcription is negatively regulated by the cognate locus, probably by this protein. A member of the higB-higA operon.</text>
</comment>
<comment type="similarity">
    <text evidence="3">Belongs to the HigA antitoxin family.</text>
</comment>
<evidence type="ECO:0000255" key="1">
    <source>
        <dbReference type="PROSITE-ProRule" id="PRU00257"/>
    </source>
</evidence>
<evidence type="ECO:0000269" key="2">
    <source>
    </source>
</evidence>
<evidence type="ECO:0000305" key="3"/>
<evidence type="ECO:0007829" key="4">
    <source>
        <dbReference type="PDB" id="6JQ4"/>
    </source>
</evidence>
<reference key="1">
    <citation type="journal article" date="1997" name="Science">
        <title>The complete genome sequence of Escherichia coli K-12.</title>
        <authorList>
            <person name="Blattner F.R."/>
            <person name="Plunkett G. III"/>
            <person name="Bloch C.A."/>
            <person name="Perna N.T."/>
            <person name="Burland V."/>
            <person name="Riley M."/>
            <person name="Collado-Vides J."/>
            <person name="Glasner J.D."/>
            <person name="Rode C.K."/>
            <person name="Mayhew G.F."/>
            <person name="Gregor J."/>
            <person name="Davis N.W."/>
            <person name="Kirkpatrick H.A."/>
            <person name="Goeden M.A."/>
            <person name="Rose D.J."/>
            <person name="Mau B."/>
            <person name="Shao Y."/>
        </authorList>
    </citation>
    <scope>NUCLEOTIDE SEQUENCE [LARGE SCALE GENOMIC DNA]</scope>
    <source>
        <strain>K12 / MG1655 / ATCC 47076</strain>
    </source>
</reference>
<reference key="2">
    <citation type="journal article" date="2006" name="Mol. Syst. Biol.">
        <title>Highly accurate genome sequences of Escherichia coli K-12 strains MG1655 and W3110.</title>
        <authorList>
            <person name="Hayashi K."/>
            <person name="Morooka N."/>
            <person name="Yamamoto Y."/>
            <person name="Fujita K."/>
            <person name="Isono K."/>
            <person name="Choi S."/>
            <person name="Ohtsubo E."/>
            <person name="Baba T."/>
            <person name="Wanner B.L."/>
            <person name="Mori H."/>
            <person name="Horiuchi T."/>
        </authorList>
    </citation>
    <scope>NUCLEOTIDE SEQUENCE [LARGE SCALE GENOMIC DNA]</scope>
    <source>
        <strain>K12 / W3110 / ATCC 27325 / DSM 5911</strain>
    </source>
</reference>
<reference key="3">
    <citation type="journal article" date="2010" name="Mol. Microbiol.">
        <title>Three new RelE-homologous mRNA interferases of Escherichia coli differentially induced by environmental stresses.</title>
        <authorList>
            <person name="Christensen-Dalsgaard M."/>
            <person name="Jorgensen M.G."/>
            <person name="Gerdes K."/>
        </authorList>
    </citation>
    <scope>FUNCTION AS AN ANTITOXIN</scope>
    <scope>INDUCTION</scope>
    <scope>OPERON STRUCTURE</scope>
    <source>
        <strain>K12 / MG1655 / ATCC 47076</strain>
    </source>
</reference>
<dbReference type="EMBL" id="U18997">
    <property type="protein sequence ID" value="AAA57883.1"/>
    <property type="molecule type" value="Genomic_DNA"/>
</dbReference>
<dbReference type="EMBL" id="U00096">
    <property type="protein sequence ID" value="AAC76117.1"/>
    <property type="molecule type" value="Genomic_DNA"/>
</dbReference>
<dbReference type="EMBL" id="AP009048">
    <property type="protein sequence ID" value="BAE77132.1"/>
    <property type="molecule type" value="Genomic_DNA"/>
</dbReference>
<dbReference type="PIR" id="G65096">
    <property type="entry name" value="G65096"/>
</dbReference>
<dbReference type="RefSeq" id="NP_417553.1">
    <property type="nucleotide sequence ID" value="NC_000913.3"/>
</dbReference>
<dbReference type="RefSeq" id="WP_000560266.1">
    <property type="nucleotide sequence ID" value="NZ_LN832404.1"/>
</dbReference>
<dbReference type="PDB" id="5IFG">
    <property type="method" value="X-ray"/>
    <property type="resolution" value="2.70 A"/>
    <property type="chains" value="B/D=1-138"/>
</dbReference>
<dbReference type="PDB" id="6JQ4">
    <property type="method" value="X-ray"/>
    <property type="resolution" value="2.00 A"/>
    <property type="chains" value="A=1-138"/>
</dbReference>
<dbReference type="PDB" id="6KML">
    <property type="method" value="X-ray"/>
    <property type="resolution" value="2.10 A"/>
    <property type="chains" value="B/D=1-138"/>
</dbReference>
<dbReference type="PDB" id="6KMQ">
    <property type="method" value="X-ray"/>
    <property type="resolution" value="2.35 A"/>
    <property type="chains" value="B=1-138"/>
</dbReference>
<dbReference type="PDBsum" id="5IFG"/>
<dbReference type="PDBsum" id="6JQ4"/>
<dbReference type="PDBsum" id="6KML"/>
<dbReference type="PDBsum" id="6KMQ"/>
<dbReference type="SMR" id="P67701"/>
<dbReference type="BioGRID" id="4262401">
    <property type="interactions" value="83"/>
</dbReference>
<dbReference type="BioGRID" id="851909">
    <property type="interactions" value="3"/>
</dbReference>
<dbReference type="ComplexPortal" id="CPX-4121">
    <property type="entry name" value="HigAB toxin-antitoxin complex"/>
</dbReference>
<dbReference type="FunCoup" id="P67701">
    <property type="interactions" value="18"/>
</dbReference>
<dbReference type="IntAct" id="P67701">
    <property type="interactions" value="13"/>
</dbReference>
<dbReference type="STRING" id="511145.b3082"/>
<dbReference type="jPOST" id="P67701"/>
<dbReference type="PaxDb" id="511145-b3082"/>
<dbReference type="EnsemblBacteria" id="AAC76117">
    <property type="protein sequence ID" value="AAC76117"/>
    <property type="gene ID" value="b3082"/>
</dbReference>
<dbReference type="GeneID" id="947593"/>
<dbReference type="KEGG" id="ecj:JW3053"/>
<dbReference type="KEGG" id="eco:b3082"/>
<dbReference type="KEGG" id="ecoc:C3026_16830"/>
<dbReference type="PATRIC" id="fig|1411691.4.peg.3647"/>
<dbReference type="EchoBASE" id="EB2583"/>
<dbReference type="eggNOG" id="COG5499">
    <property type="taxonomic scope" value="Bacteria"/>
</dbReference>
<dbReference type="HOGENOM" id="CLU_125852_0_0_6"/>
<dbReference type="InParanoid" id="P67701"/>
<dbReference type="OMA" id="DIAQTWA"/>
<dbReference type="OrthoDB" id="5771335at2"/>
<dbReference type="PhylomeDB" id="P67701"/>
<dbReference type="BioCyc" id="EcoCyc:G7601-MONOMER"/>
<dbReference type="BioCyc" id="MetaCyc:G7601-MONOMER"/>
<dbReference type="PRO" id="PR:P67701"/>
<dbReference type="Proteomes" id="UP000000625">
    <property type="component" value="Chromosome"/>
</dbReference>
<dbReference type="GO" id="GO:0110001">
    <property type="term" value="C:toxin-antitoxin complex"/>
    <property type="evidence" value="ECO:0000314"/>
    <property type="project" value="EcoCyc"/>
</dbReference>
<dbReference type="GO" id="GO:0001046">
    <property type="term" value="F:core promoter sequence-specific DNA binding"/>
    <property type="evidence" value="ECO:0000314"/>
    <property type="project" value="EcoCyc"/>
</dbReference>
<dbReference type="GO" id="GO:0042803">
    <property type="term" value="F:protein homodimerization activity"/>
    <property type="evidence" value="ECO:0000314"/>
    <property type="project" value="EcoCyc"/>
</dbReference>
<dbReference type="GO" id="GO:0006355">
    <property type="term" value="P:regulation of DNA-templated transcription"/>
    <property type="evidence" value="ECO:0000303"/>
    <property type="project" value="ComplexPortal"/>
</dbReference>
<dbReference type="GO" id="GO:0040008">
    <property type="term" value="P:regulation of growth"/>
    <property type="evidence" value="ECO:0000303"/>
    <property type="project" value="ComplexPortal"/>
</dbReference>
<dbReference type="CDD" id="cd00093">
    <property type="entry name" value="HTH_XRE"/>
    <property type="match status" value="1"/>
</dbReference>
<dbReference type="FunFam" id="1.10.260.40:FF:000026">
    <property type="entry name" value="Predicted DNA-binding transcriptional regulator"/>
    <property type="match status" value="1"/>
</dbReference>
<dbReference type="Gene3D" id="1.10.260.40">
    <property type="entry name" value="lambda repressor-like DNA-binding domains"/>
    <property type="match status" value="1"/>
</dbReference>
<dbReference type="InterPro" id="IPR039060">
    <property type="entry name" value="Antitox_HigA"/>
</dbReference>
<dbReference type="InterPro" id="IPR001387">
    <property type="entry name" value="Cro/C1-type_HTH"/>
</dbReference>
<dbReference type="InterPro" id="IPR010982">
    <property type="entry name" value="Lambda_DNA-bd_dom_sf"/>
</dbReference>
<dbReference type="PANTHER" id="PTHR40455">
    <property type="entry name" value="ANTITOXIN HIGA"/>
    <property type="match status" value="1"/>
</dbReference>
<dbReference type="PANTHER" id="PTHR40455:SF1">
    <property type="entry name" value="ANTITOXIN HIGA"/>
    <property type="match status" value="1"/>
</dbReference>
<dbReference type="Pfam" id="PF01381">
    <property type="entry name" value="HTH_3"/>
    <property type="match status" value="1"/>
</dbReference>
<dbReference type="SMART" id="SM00530">
    <property type="entry name" value="HTH_XRE"/>
    <property type="match status" value="1"/>
</dbReference>
<dbReference type="SUPFAM" id="SSF47413">
    <property type="entry name" value="lambda repressor-like DNA-binding domains"/>
    <property type="match status" value="1"/>
</dbReference>
<dbReference type="PROSITE" id="PS50943">
    <property type="entry name" value="HTH_CROC1"/>
    <property type="match status" value="1"/>
</dbReference>
<gene>
    <name type="primary">higA</name>
    <name type="synonym">ygjM</name>
    <name type="ordered locus">b3082</name>
    <name type="ordered locus">JW3053</name>
</gene>
<protein>
    <recommendedName>
        <fullName>Antitoxin HigA</fullName>
    </recommendedName>
</protein>
<proteinExistence type="evidence at protein level"/>
<sequence length="138" mass="14995">MIAIADILQAGEKLTAVAPFLAGIQNEEQYTQALELVDHLLLNDPENPLLDLVCAKITAWEESAPEFAEFNAMAQAMPGGIAVIRTLMDQYGLTLSDLPEIGSKSMVSRVLSGKRKLTLEHAKKLATRFGISPALFID</sequence>
<accession>P67701</accession>
<accession>P42594</accession>
<accession>Q2M9C4</accession>